<accession>Q2L058</accession>
<evidence type="ECO:0000255" key="1">
    <source>
        <dbReference type="HAMAP-Rule" id="MF_01363"/>
    </source>
</evidence>
<evidence type="ECO:0000305" key="2"/>
<keyword id="KW-1185">Reference proteome</keyword>
<keyword id="KW-0687">Ribonucleoprotein</keyword>
<keyword id="KW-0689">Ribosomal protein</keyword>
<keyword id="KW-0694">RNA-binding</keyword>
<keyword id="KW-0699">rRNA-binding</keyword>
<reference key="1">
    <citation type="journal article" date="2006" name="J. Bacteriol.">
        <title>Comparison of the genome sequence of the poultry pathogen Bordetella avium with those of B. bronchiseptica, B. pertussis, and B. parapertussis reveals extensive diversity in surface structures associated with host interaction.</title>
        <authorList>
            <person name="Sebaihia M."/>
            <person name="Preston A."/>
            <person name="Maskell D.J."/>
            <person name="Kuzmiak H."/>
            <person name="Connell T.D."/>
            <person name="King N.D."/>
            <person name="Orndorff P.E."/>
            <person name="Miyamoto D.M."/>
            <person name="Thomson N.R."/>
            <person name="Harris D."/>
            <person name="Goble A."/>
            <person name="Lord A."/>
            <person name="Murphy L."/>
            <person name="Quail M.A."/>
            <person name="Rutter S."/>
            <person name="Squares R."/>
            <person name="Squares S."/>
            <person name="Woodward J."/>
            <person name="Parkhill J."/>
            <person name="Temple L.M."/>
        </authorList>
    </citation>
    <scope>NUCLEOTIDE SEQUENCE [LARGE SCALE GENOMIC DNA]</scope>
    <source>
        <strain>197N</strain>
    </source>
</reference>
<feature type="chain" id="PRO_0000269285" description="Large ribosomal subunit protein bL21">
    <location>
        <begin position="1"/>
        <end position="103"/>
    </location>
</feature>
<comment type="function">
    <text evidence="1">This protein binds to 23S rRNA in the presence of protein L20.</text>
</comment>
<comment type="subunit">
    <text evidence="1">Part of the 50S ribosomal subunit. Contacts protein L20.</text>
</comment>
<comment type="similarity">
    <text evidence="1">Belongs to the bacterial ribosomal protein bL21 family.</text>
</comment>
<gene>
    <name evidence="1" type="primary">rplU</name>
    <name type="ordered locus">BAV0259</name>
</gene>
<protein>
    <recommendedName>
        <fullName evidence="1">Large ribosomal subunit protein bL21</fullName>
    </recommendedName>
    <alternativeName>
        <fullName evidence="2">50S ribosomal protein L21</fullName>
    </alternativeName>
</protein>
<dbReference type="EMBL" id="AM167904">
    <property type="protein sequence ID" value="CAJ47864.1"/>
    <property type="molecule type" value="Genomic_DNA"/>
</dbReference>
<dbReference type="RefSeq" id="WP_005016713.1">
    <property type="nucleotide sequence ID" value="NC_010645.1"/>
</dbReference>
<dbReference type="SMR" id="Q2L058"/>
<dbReference type="STRING" id="360910.BAV0259"/>
<dbReference type="GeneID" id="93118503"/>
<dbReference type="KEGG" id="bav:BAV0259"/>
<dbReference type="eggNOG" id="COG0261">
    <property type="taxonomic scope" value="Bacteria"/>
</dbReference>
<dbReference type="HOGENOM" id="CLU_061463_3_2_4"/>
<dbReference type="OrthoDB" id="9813334at2"/>
<dbReference type="Proteomes" id="UP000001977">
    <property type="component" value="Chromosome"/>
</dbReference>
<dbReference type="GO" id="GO:0005737">
    <property type="term" value="C:cytoplasm"/>
    <property type="evidence" value="ECO:0007669"/>
    <property type="project" value="UniProtKB-ARBA"/>
</dbReference>
<dbReference type="GO" id="GO:1990904">
    <property type="term" value="C:ribonucleoprotein complex"/>
    <property type="evidence" value="ECO:0007669"/>
    <property type="project" value="UniProtKB-KW"/>
</dbReference>
<dbReference type="GO" id="GO:0005840">
    <property type="term" value="C:ribosome"/>
    <property type="evidence" value="ECO:0007669"/>
    <property type="project" value="UniProtKB-KW"/>
</dbReference>
<dbReference type="GO" id="GO:0019843">
    <property type="term" value="F:rRNA binding"/>
    <property type="evidence" value="ECO:0007669"/>
    <property type="project" value="UniProtKB-UniRule"/>
</dbReference>
<dbReference type="GO" id="GO:0003735">
    <property type="term" value="F:structural constituent of ribosome"/>
    <property type="evidence" value="ECO:0007669"/>
    <property type="project" value="InterPro"/>
</dbReference>
<dbReference type="GO" id="GO:0006412">
    <property type="term" value="P:translation"/>
    <property type="evidence" value="ECO:0007669"/>
    <property type="project" value="UniProtKB-UniRule"/>
</dbReference>
<dbReference type="HAMAP" id="MF_01363">
    <property type="entry name" value="Ribosomal_bL21"/>
    <property type="match status" value="1"/>
</dbReference>
<dbReference type="InterPro" id="IPR028909">
    <property type="entry name" value="bL21-like"/>
</dbReference>
<dbReference type="InterPro" id="IPR036164">
    <property type="entry name" value="bL21-like_sf"/>
</dbReference>
<dbReference type="InterPro" id="IPR001787">
    <property type="entry name" value="Ribosomal_bL21"/>
</dbReference>
<dbReference type="InterPro" id="IPR018258">
    <property type="entry name" value="Ribosomal_bL21_CS"/>
</dbReference>
<dbReference type="NCBIfam" id="TIGR00061">
    <property type="entry name" value="L21"/>
    <property type="match status" value="1"/>
</dbReference>
<dbReference type="PANTHER" id="PTHR21349">
    <property type="entry name" value="50S RIBOSOMAL PROTEIN L21"/>
    <property type="match status" value="1"/>
</dbReference>
<dbReference type="PANTHER" id="PTHR21349:SF0">
    <property type="entry name" value="LARGE RIBOSOMAL SUBUNIT PROTEIN BL21M"/>
    <property type="match status" value="1"/>
</dbReference>
<dbReference type="Pfam" id="PF00829">
    <property type="entry name" value="Ribosomal_L21p"/>
    <property type="match status" value="1"/>
</dbReference>
<dbReference type="SUPFAM" id="SSF141091">
    <property type="entry name" value="L21p-like"/>
    <property type="match status" value="1"/>
</dbReference>
<dbReference type="PROSITE" id="PS01169">
    <property type="entry name" value="RIBOSOMAL_L21"/>
    <property type="match status" value="1"/>
</dbReference>
<proteinExistence type="inferred from homology"/>
<sequence>MYAVVKTGGKQYRVAAGEKLKVEQIPADIGQEITLDQVLSVGEGDQLKVGTPLVAGAVVKATVLAHGRHDKVKIFKMRRRKHYQKRQGHRQNYTEIRIEAITA</sequence>
<name>RL21_BORA1</name>
<organism>
    <name type="scientific">Bordetella avium (strain 197N)</name>
    <dbReference type="NCBI Taxonomy" id="360910"/>
    <lineage>
        <taxon>Bacteria</taxon>
        <taxon>Pseudomonadati</taxon>
        <taxon>Pseudomonadota</taxon>
        <taxon>Betaproteobacteria</taxon>
        <taxon>Burkholderiales</taxon>
        <taxon>Alcaligenaceae</taxon>
        <taxon>Bordetella</taxon>
    </lineage>
</organism>